<protein>
    <recommendedName>
        <fullName>Suppressor of IKBKE 1</fullName>
    </recommendedName>
    <alternativeName>
        <fullName>Suppressor of IKK-epsilon</fullName>
    </alternativeName>
</protein>
<feature type="chain" id="PRO_0000299051" description="Suppressor of IKBKE 1">
    <location>
        <begin position="1"/>
        <end position="207"/>
    </location>
</feature>
<feature type="coiled-coil region" evidence="2">
    <location>
        <begin position="70"/>
        <end position="102"/>
    </location>
</feature>
<feature type="coiled-coil region" evidence="2">
    <location>
        <begin position="164"/>
        <end position="192"/>
    </location>
</feature>
<feature type="sequence conflict" description="In Ref. 1; BAC29116." evidence="3" ref="1">
    <original>M</original>
    <variation>V</variation>
    <location>
        <position position="64"/>
    </location>
</feature>
<organism>
    <name type="scientific">Mus musculus</name>
    <name type="common">Mouse</name>
    <dbReference type="NCBI Taxonomy" id="10090"/>
    <lineage>
        <taxon>Eukaryota</taxon>
        <taxon>Metazoa</taxon>
        <taxon>Chordata</taxon>
        <taxon>Craniata</taxon>
        <taxon>Vertebrata</taxon>
        <taxon>Euteleostomi</taxon>
        <taxon>Mammalia</taxon>
        <taxon>Eutheria</taxon>
        <taxon>Euarchontoglires</taxon>
        <taxon>Glires</taxon>
        <taxon>Rodentia</taxon>
        <taxon>Myomorpha</taxon>
        <taxon>Muroidea</taxon>
        <taxon>Muridae</taxon>
        <taxon>Murinae</taxon>
        <taxon>Mus</taxon>
        <taxon>Mus</taxon>
    </lineage>
</organism>
<gene>
    <name type="primary">Sike1</name>
</gene>
<reference key="1">
    <citation type="journal article" date="2005" name="Science">
        <title>The transcriptional landscape of the mammalian genome.</title>
        <authorList>
            <person name="Carninci P."/>
            <person name="Kasukawa T."/>
            <person name="Katayama S."/>
            <person name="Gough J."/>
            <person name="Frith M.C."/>
            <person name="Maeda N."/>
            <person name="Oyama R."/>
            <person name="Ravasi T."/>
            <person name="Lenhard B."/>
            <person name="Wells C."/>
            <person name="Kodzius R."/>
            <person name="Shimokawa K."/>
            <person name="Bajic V.B."/>
            <person name="Brenner S.E."/>
            <person name="Batalov S."/>
            <person name="Forrest A.R."/>
            <person name="Zavolan M."/>
            <person name="Davis M.J."/>
            <person name="Wilming L.G."/>
            <person name="Aidinis V."/>
            <person name="Allen J.E."/>
            <person name="Ambesi-Impiombato A."/>
            <person name="Apweiler R."/>
            <person name="Aturaliya R.N."/>
            <person name="Bailey T.L."/>
            <person name="Bansal M."/>
            <person name="Baxter L."/>
            <person name="Beisel K.W."/>
            <person name="Bersano T."/>
            <person name="Bono H."/>
            <person name="Chalk A.M."/>
            <person name="Chiu K.P."/>
            <person name="Choudhary V."/>
            <person name="Christoffels A."/>
            <person name="Clutterbuck D.R."/>
            <person name="Crowe M.L."/>
            <person name="Dalla E."/>
            <person name="Dalrymple B.P."/>
            <person name="de Bono B."/>
            <person name="Della Gatta G."/>
            <person name="di Bernardo D."/>
            <person name="Down T."/>
            <person name="Engstrom P."/>
            <person name="Fagiolini M."/>
            <person name="Faulkner G."/>
            <person name="Fletcher C.F."/>
            <person name="Fukushima T."/>
            <person name="Furuno M."/>
            <person name="Futaki S."/>
            <person name="Gariboldi M."/>
            <person name="Georgii-Hemming P."/>
            <person name="Gingeras T.R."/>
            <person name="Gojobori T."/>
            <person name="Green R.E."/>
            <person name="Gustincich S."/>
            <person name="Harbers M."/>
            <person name="Hayashi Y."/>
            <person name="Hensch T.K."/>
            <person name="Hirokawa N."/>
            <person name="Hill D."/>
            <person name="Huminiecki L."/>
            <person name="Iacono M."/>
            <person name="Ikeo K."/>
            <person name="Iwama A."/>
            <person name="Ishikawa T."/>
            <person name="Jakt M."/>
            <person name="Kanapin A."/>
            <person name="Katoh M."/>
            <person name="Kawasawa Y."/>
            <person name="Kelso J."/>
            <person name="Kitamura H."/>
            <person name="Kitano H."/>
            <person name="Kollias G."/>
            <person name="Krishnan S.P."/>
            <person name="Kruger A."/>
            <person name="Kummerfeld S.K."/>
            <person name="Kurochkin I.V."/>
            <person name="Lareau L.F."/>
            <person name="Lazarevic D."/>
            <person name="Lipovich L."/>
            <person name="Liu J."/>
            <person name="Liuni S."/>
            <person name="McWilliam S."/>
            <person name="Madan Babu M."/>
            <person name="Madera M."/>
            <person name="Marchionni L."/>
            <person name="Matsuda H."/>
            <person name="Matsuzawa S."/>
            <person name="Miki H."/>
            <person name="Mignone F."/>
            <person name="Miyake S."/>
            <person name="Morris K."/>
            <person name="Mottagui-Tabar S."/>
            <person name="Mulder N."/>
            <person name="Nakano N."/>
            <person name="Nakauchi H."/>
            <person name="Ng P."/>
            <person name="Nilsson R."/>
            <person name="Nishiguchi S."/>
            <person name="Nishikawa S."/>
            <person name="Nori F."/>
            <person name="Ohara O."/>
            <person name="Okazaki Y."/>
            <person name="Orlando V."/>
            <person name="Pang K.C."/>
            <person name="Pavan W.J."/>
            <person name="Pavesi G."/>
            <person name="Pesole G."/>
            <person name="Petrovsky N."/>
            <person name="Piazza S."/>
            <person name="Reed J."/>
            <person name="Reid J.F."/>
            <person name="Ring B.Z."/>
            <person name="Ringwald M."/>
            <person name="Rost B."/>
            <person name="Ruan Y."/>
            <person name="Salzberg S.L."/>
            <person name="Sandelin A."/>
            <person name="Schneider C."/>
            <person name="Schoenbach C."/>
            <person name="Sekiguchi K."/>
            <person name="Semple C.A."/>
            <person name="Seno S."/>
            <person name="Sessa L."/>
            <person name="Sheng Y."/>
            <person name="Shibata Y."/>
            <person name="Shimada H."/>
            <person name="Shimada K."/>
            <person name="Silva D."/>
            <person name="Sinclair B."/>
            <person name="Sperling S."/>
            <person name="Stupka E."/>
            <person name="Sugiura K."/>
            <person name="Sultana R."/>
            <person name="Takenaka Y."/>
            <person name="Taki K."/>
            <person name="Tammoja K."/>
            <person name="Tan S.L."/>
            <person name="Tang S."/>
            <person name="Taylor M.S."/>
            <person name="Tegner J."/>
            <person name="Teichmann S.A."/>
            <person name="Ueda H.R."/>
            <person name="van Nimwegen E."/>
            <person name="Verardo R."/>
            <person name="Wei C.L."/>
            <person name="Yagi K."/>
            <person name="Yamanishi H."/>
            <person name="Zabarovsky E."/>
            <person name="Zhu S."/>
            <person name="Zimmer A."/>
            <person name="Hide W."/>
            <person name="Bult C."/>
            <person name="Grimmond S.M."/>
            <person name="Teasdale R.D."/>
            <person name="Liu E.T."/>
            <person name="Brusic V."/>
            <person name="Quackenbush J."/>
            <person name="Wahlestedt C."/>
            <person name="Mattick J.S."/>
            <person name="Hume D.A."/>
            <person name="Kai C."/>
            <person name="Sasaki D."/>
            <person name="Tomaru Y."/>
            <person name="Fukuda S."/>
            <person name="Kanamori-Katayama M."/>
            <person name="Suzuki M."/>
            <person name="Aoki J."/>
            <person name="Arakawa T."/>
            <person name="Iida J."/>
            <person name="Imamura K."/>
            <person name="Itoh M."/>
            <person name="Kato T."/>
            <person name="Kawaji H."/>
            <person name="Kawagashira N."/>
            <person name="Kawashima T."/>
            <person name="Kojima M."/>
            <person name="Kondo S."/>
            <person name="Konno H."/>
            <person name="Nakano K."/>
            <person name="Ninomiya N."/>
            <person name="Nishio T."/>
            <person name="Okada M."/>
            <person name="Plessy C."/>
            <person name="Shibata K."/>
            <person name="Shiraki T."/>
            <person name="Suzuki S."/>
            <person name="Tagami M."/>
            <person name="Waki K."/>
            <person name="Watahiki A."/>
            <person name="Okamura-Oho Y."/>
            <person name="Suzuki H."/>
            <person name="Kawai J."/>
            <person name="Hayashizaki Y."/>
        </authorList>
    </citation>
    <scope>NUCLEOTIDE SEQUENCE [LARGE SCALE MRNA]</scope>
    <source>
        <strain>C57BL/6J</strain>
        <tissue>Colon</tissue>
        <tissue>Head</tissue>
        <tissue>Urinary bladder</tissue>
    </source>
</reference>
<reference key="2">
    <citation type="journal article" date="2004" name="Genome Res.">
        <title>The status, quality, and expansion of the NIH full-length cDNA project: the Mammalian Gene Collection (MGC).</title>
        <authorList>
            <consortium name="The MGC Project Team"/>
        </authorList>
    </citation>
    <scope>NUCLEOTIDE SEQUENCE [LARGE SCALE MRNA]</scope>
    <source>
        <strain>FVB/N</strain>
        <tissue>Mammary tumor</tissue>
    </source>
</reference>
<reference key="3">
    <citation type="journal article" date="2010" name="Cell">
        <title>A tissue-specific atlas of mouse protein phosphorylation and expression.</title>
        <authorList>
            <person name="Huttlin E.L."/>
            <person name="Jedrychowski M.P."/>
            <person name="Elias J.E."/>
            <person name="Goswami T."/>
            <person name="Rad R."/>
            <person name="Beausoleil S.A."/>
            <person name="Villen J."/>
            <person name="Haas W."/>
            <person name="Sowa M.E."/>
            <person name="Gygi S.P."/>
        </authorList>
    </citation>
    <scope>IDENTIFICATION BY MASS SPECTROMETRY [LARGE SCALE ANALYSIS]</scope>
    <source>
        <tissue>Brain</tissue>
        <tissue>Heart</tissue>
        <tissue>Kidney</tissue>
        <tissue>Liver</tissue>
        <tissue>Lung</tissue>
        <tissue>Spleen</tissue>
        <tissue>Testis</tissue>
    </source>
</reference>
<accession>Q9CPR7</accession>
<accession>Q8CBP5</accession>
<proteinExistence type="evidence at protein level"/>
<sequence>MSCTIEKILTDAKTLLERLREHDAAAESLVDQSAALHRRVAAMREAGAVLPEQYQEDASDVKDMSKYKPHILLSQENTQIRDLQQENRELWVSLEEHQDALELIMSKYRKQMLQLMVAKKAVDAEPVLKAHQSHSAEIESQIDRICEMGAVMRRAVQVDDNQFCKVQERLAQLELENKELRELLSISSESLQVGKESSVAPASQTIK</sequence>
<dbReference type="EMBL" id="AK014113">
    <property type="protein sequence ID" value="BAB29165.1"/>
    <property type="molecule type" value="mRNA"/>
</dbReference>
<dbReference type="EMBL" id="AK014247">
    <property type="protein sequence ID" value="BAB29223.1"/>
    <property type="molecule type" value="mRNA"/>
</dbReference>
<dbReference type="EMBL" id="AK017694">
    <property type="protein sequence ID" value="BAB30879.1"/>
    <property type="molecule type" value="mRNA"/>
</dbReference>
<dbReference type="EMBL" id="AK019264">
    <property type="protein sequence ID" value="BAB31636.1"/>
    <property type="molecule type" value="mRNA"/>
</dbReference>
<dbReference type="EMBL" id="AK033553">
    <property type="protein sequence ID" value="BAC28353.1"/>
    <property type="molecule type" value="mRNA"/>
</dbReference>
<dbReference type="EMBL" id="AK035590">
    <property type="protein sequence ID" value="BAC29116.1"/>
    <property type="molecule type" value="mRNA"/>
</dbReference>
<dbReference type="EMBL" id="BC004090">
    <property type="protein sequence ID" value="AAH04090.1"/>
    <property type="molecule type" value="mRNA"/>
</dbReference>
<dbReference type="CCDS" id="CCDS17690.1"/>
<dbReference type="RefSeq" id="NP_079955.1">
    <property type="nucleotide sequence ID" value="NM_025679.3"/>
</dbReference>
<dbReference type="SMR" id="Q9CPR7"/>
<dbReference type="BioGRID" id="211615">
    <property type="interactions" value="1"/>
</dbReference>
<dbReference type="FunCoup" id="Q9CPR7">
    <property type="interactions" value="3901"/>
</dbReference>
<dbReference type="IntAct" id="Q9CPR7">
    <property type="interactions" value="1"/>
</dbReference>
<dbReference type="STRING" id="10090.ENSMUSP00000029447"/>
<dbReference type="iPTMnet" id="Q9CPR7"/>
<dbReference type="PhosphoSitePlus" id="Q9CPR7"/>
<dbReference type="PaxDb" id="10090-ENSMUSP00000029447"/>
<dbReference type="PeptideAtlas" id="Q9CPR7"/>
<dbReference type="ProteomicsDB" id="261042"/>
<dbReference type="Pumba" id="Q9CPR7"/>
<dbReference type="Antibodypedia" id="20165">
    <property type="antibodies" value="114 antibodies from 22 providers"/>
</dbReference>
<dbReference type="Ensembl" id="ENSMUST00000029447.12">
    <property type="protein sequence ID" value="ENSMUSP00000029447.6"/>
    <property type="gene ID" value="ENSMUSG00000027854.13"/>
</dbReference>
<dbReference type="GeneID" id="66641"/>
<dbReference type="KEGG" id="mmu:66641"/>
<dbReference type="UCSC" id="uc008qsf.1">
    <property type="organism name" value="mouse"/>
</dbReference>
<dbReference type="AGR" id="MGI:1913891"/>
<dbReference type="CTD" id="80143"/>
<dbReference type="MGI" id="MGI:1913891">
    <property type="gene designation" value="Sike1"/>
</dbReference>
<dbReference type="VEuPathDB" id="HostDB:ENSMUSG00000027854"/>
<dbReference type="eggNOG" id="ENOG502QTKS">
    <property type="taxonomic scope" value="Eukaryota"/>
</dbReference>
<dbReference type="GeneTree" id="ENSGT00390000018003"/>
<dbReference type="HOGENOM" id="CLU_073167_1_0_1"/>
<dbReference type="InParanoid" id="Q9CPR7"/>
<dbReference type="OMA" id="MSKFKPH"/>
<dbReference type="OrthoDB" id="21214at2759"/>
<dbReference type="PhylomeDB" id="Q9CPR7"/>
<dbReference type="TreeFam" id="TF324337"/>
<dbReference type="BioGRID-ORCS" id="66641">
    <property type="hits" value="2 hits in 77 CRISPR screens"/>
</dbReference>
<dbReference type="ChiTaRS" id="Sike1">
    <property type="organism name" value="mouse"/>
</dbReference>
<dbReference type="PRO" id="PR:Q9CPR7"/>
<dbReference type="Proteomes" id="UP000000589">
    <property type="component" value="Chromosome 3"/>
</dbReference>
<dbReference type="RNAct" id="Q9CPR7">
    <property type="molecule type" value="protein"/>
</dbReference>
<dbReference type="Bgee" id="ENSMUSG00000027854">
    <property type="expression patterns" value="Expressed in atrioventricular valve and 261 other cell types or tissues"/>
</dbReference>
<dbReference type="ExpressionAtlas" id="Q9CPR7">
    <property type="expression patterns" value="baseline and differential"/>
</dbReference>
<dbReference type="GO" id="GO:0005737">
    <property type="term" value="C:cytoplasm"/>
    <property type="evidence" value="ECO:0007669"/>
    <property type="project" value="UniProtKB-SubCell"/>
</dbReference>
<dbReference type="GO" id="GO:0090443">
    <property type="term" value="C:FAR/SIN/STRIPAK complex"/>
    <property type="evidence" value="ECO:0000250"/>
    <property type="project" value="UniProtKB"/>
</dbReference>
<dbReference type="GO" id="GO:0019901">
    <property type="term" value="F:protein kinase binding"/>
    <property type="evidence" value="ECO:0007669"/>
    <property type="project" value="Ensembl"/>
</dbReference>
<dbReference type="GO" id="GO:0030674">
    <property type="term" value="F:protein-macromolecule adaptor activity"/>
    <property type="evidence" value="ECO:0000250"/>
    <property type="project" value="UniProtKB"/>
</dbReference>
<dbReference type="GO" id="GO:0031267">
    <property type="term" value="F:small GTPase binding"/>
    <property type="evidence" value="ECO:0007669"/>
    <property type="project" value="Ensembl"/>
</dbReference>
<dbReference type="GO" id="GO:0035331">
    <property type="term" value="P:negative regulation of hippo signaling"/>
    <property type="evidence" value="ECO:0000250"/>
    <property type="project" value="UniProtKB"/>
</dbReference>
<dbReference type="InterPro" id="IPR008555">
    <property type="entry name" value="SIKE"/>
</dbReference>
<dbReference type="PANTHER" id="PTHR12186">
    <property type="entry name" value="SIKE FAMILY MEMBER"/>
    <property type="match status" value="1"/>
</dbReference>
<dbReference type="PANTHER" id="PTHR12186:SF4">
    <property type="entry name" value="SUPPRESSOR OF IKBKE 1"/>
    <property type="match status" value="1"/>
</dbReference>
<dbReference type="Pfam" id="PF05769">
    <property type="entry name" value="SIKE"/>
    <property type="match status" value="1"/>
</dbReference>
<evidence type="ECO:0000250" key="1">
    <source>
        <dbReference type="UniProtKB" id="Q9BRV8"/>
    </source>
</evidence>
<evidence type="ECO:0000255" key="2"/>
<evidence type="ECO:0000305" key="3"/>
<comment type="function">
    <text evidence="1">Physiological suppressor of IKK-epsilon and TBK1 that plays an inhibitory role in virus- and TLR3-triggered IRF3. Inhibits TLR3-mediated activation of interferon-stimulated response elements (ISRE) and the IFN-beta promoter. May act by disrupting the interactions of IKBKE or TBK1 with TICAM1/TRIF, IRF3 and RIGI. Does not inhibit NF-kappa-B activation pathways. Associates with the striatin-interacting phosphatase and kinase (STRIPAK) core complex, forming the extended (SIKE1:SLMAP)STRIPAK complex. The (SIKE1:SLMAP)STRIPAK complex dephosphorylates STK3 leading to the inhibition of Hippo signaling and the control of cell growth.</text>
</comment>
<comment type="subunit">
    <text evidence="1">Interacts with IKBKE and TBK1 via its coiled coil region. Interaction with TBK1 is disrupted upon viral infection or TLR3 stimulation. Interacts with CDC42BPB. Interacts with SIKE1 which mediates association with the STRIPAK core complex composed of PP2A catalytic and scaffolding subunits, the striatins (PP2A regulatory subunits), the striatin-associated proteins MOB4, STRIP1 and STRIP2, PDCD10 and members of the STE20 kinases, such as STK24 and STK26.</text>
</comment>
<comment type="subcellular location">
    <subcellularLocation>
        <location evidence="1">Cytoplasm</location>
    </subcellularLocation>
</comment>
<comment type="similarity">
    <text evidence="3">Belongs to the SIKE family.</text>
</comment>
<keyword id="KW-0175">Coiled coil</keyword>
<keyword id="KW-0963">Cytoplasm</keyword>
<keyword id="KW-1185">Reference proteome</keyword>
<name>SIKE1_MOUSE</name>